<name>YSH1_GIBZE</name>
<reference key="1">
    <citation type="journal article" date="2007" name="Science">
        <title>The Fusarium graminearum genome reveals a link between localized polymorphism and pathogen specialization.</title>
        <authorList>
            <person name="Cuomo C.A."/>
            <person name="Gueldener U."/>
            <person name="Xu J.-R."/>
            <person name="Trail F."/>
            <person name="Turgeon B.G."/>
            <person name="Di Pietro A."/>
            <person name="Walton J.D."/>
            <person name="Ma L.-J."/>
            <person name="Baker S.E."/>
            <person name="Rep M."/>
            <person name="Adam G."/>
            <person name="Antoniw J."/>
            <person name="Baldwin T."/>
            <person name="Calvo S.E."/>
            <person name="Chang Y.-L."/>
            <person name="DeCaprio D."/>
            <person name="Gale L.R."/>
            <person name="Gnerre S."/>
            <person name="Goswami R.S."/>
            <person name="Hammond-Kosack K."/>
            <person name="Harris L.J."/>
            <person name="Hilburn K."/>
            <person name="Kennell J.C."/>
            <person name="Kroken S."/>
            <person name="Magnuson J.K."/>
            <person name="Mannhaupt G."/>
            <person name="Mauceli E.W."/>
            <person name="Mewes H.-W."/>
            <person name="Mitterbauer R."/>
            <person name="Muehlbauer G."/>
            <person name="Muensterkoetter M."/>
            <person name="Nelson D."/>
            <person name="O'Donnell K."/>
            <person name="Ouellet T."/>
            <person name="Qi W."/>
            <person name="Quesneville H."/>
            <person name="Roncero M.I.G."/>
            <person name="Seong K.-Y."/>
            <person name="Tetko I.V."/>
            <person name="Urban M."/>
            <person name="Waalwijk C."/>
            <person name="Ward T.J."/>
            <person name="Yao J."/>
            <person name="Birren B.W."/>
            <person name="Kistler H.C."/>
        </authorList>
    </citation>
    <scope>NUCLEOTIDE SEQUENCE [LARGE SCALE GENOMIC DNA]</scope>
    <source>
        <strain>ATCC MYA-4620 / CBS 123657 / FGSC 9075 / NRRL 31084 / PH-1</strain>
    </source>
</reference>
<reference key="2">
    <citation type="journal article" date="2010" name="Nature">
        <title>Comparative genomics reveals mobile pathogenicity chromosomes in Fusarium.</title>
        <authorList>
            <person name="Ma L.-J."/>
            <person name="van der Does H.C."/>
            <person name="Borkovich K.A."/>
            <person name="Coleman J.J."/>
            <person name="Daboussi M.-J."/>
            <person name="Di Pietro A."/>
            <person name="Dufresne M."/>
            <person name="Freitag M."/>
            <person name="Grabherr M."/>
            <person name="Henrissat B."/>
            <person name="Houterman P.M."/>
            <person name="Kang S."/>
            <person name="Shim W.-B."/>
            <person name="Woloshuk C."/>
            <person name="Xie X."/>
            <person name="Xu J.-R."/>
            <person name="Antoniw J."/>
            <person name="Baker S.E."/>
            <person name="Bluhm B.H."/>
            <person name="Breakspear A."/>
            <person name="Brown D.W."/>
            <person name="Butchko R.A.E."/>
            <person name="Chapman S."/>
            <person name="Coulson R."/>
            <person name="Coutinho P.M."/>
            <person name="Danchin E.G.J."/>
            <person name="Diener A."/>
            <person name="Gale L.R."/>
            <person name="Gardiner D.M."/>
            <person name="Goff S."/>
            <person name="Hammond-Kosack K.E."/>
            <person name="Hilburn K."/>
            <person name="Hua-Van A."/>
            <person name="Jonkers W."/>
            <person name="Kazan K."/>
            <person name="Kodira C.D."/>
            <person name="Koehrsen M."/>
            <person name="Kumar L."/>
            <person name="Lee Y.-H."/>
            <person name="Li L."/>
            <person name="Manners J.M."/>
            <person name="Miranda-Saavedra D."/>
            <person name="Mukherjee M."/>
            <person name="Park G."/>
            <person name="Park J."/>
            <person name="Park S.-Y."/>
            <person name="Proctor R.H."/>
            <person name="Regev A."/>
            <person name="Ruiz-Roldan M.C."/>
            <person name="Sain D."/>
            <person name="Sakthikumar S."/>
            <person name="Sykes S."/>
            <person name="Schwartz D.C."/>
            <person name="Turgeon B.G."/>
            <person name="Wapinski I."/>
            <person name="Yoder O."/>
            <person name="Young S."/>
            <person name="Zeng Q."/>
            <person name="Zhou S."/>
            <person name="Galagan J."/>
            <person name="Cuomo C.A."/>
            <person name="Kistler H.C."/>
            <person name="Rep M."/>
        </authorList>
    </citation>
    <scope>GENOME REANNOTATION</scope>
    <source>
        <strain>ATCC MYA-4620 / CBS 123657 / FGSC 9075 / NRRL 31084 / PH-1</strain>
    </source>
</reference>
<reference key="3">
    <citation type="journal article" date="2015" name="BMC Genomics">
        <title>The completed genome sequence of the pathogenic ascomycete fungus Fusarium graminearum.</title>
        <authorList>
            <person name="King R."/>
            <person name="Urban M."/>
            <person name="Hammond-Kosack M.C.U."/>
            <person name="Hassani-Pak K."/>
            <person name="Hammond-Kosack K.E."/>
        </authorList>
    </citation>
    <scope>NUCLEOTIDE SEQUENCE [LARGE SCALE GENOMIC DNA]</scope>
    <source>
        <strain>ATCC MYA-4620 / CBS 123657 / FGSC 9075 / NRRL 31084 / PH-1</strain>
    </source>
</reference>
<keyword id="KW-0255">Endonuclease</keyword>
<keyword id="KW-0378">Hydrolase</keyword>
<keyword id="KW-0479">Metal-binding</keyword>
<keyword id="KW-0507">mRNA processing</keyword>
<keyword id="KW-0540">Nuclease</keyword>
<keyword id="KW-0539">Nucleus</keyword>
<keyword id="KW-1185">Reference proteome</keyword>
<keyword id="KW-0862">Zinc</keyword>
<feature type="chain" id="PRO_0000238903" description="Endoribonuclease YSH1">
    <location>
        <begin position="1"/>
        <end position="833"/>
    </location>
</feature>
<feature type="region of interest" description="Disordered" evidence="3">
    <location>
        <begin position="600"/>
        <end position="624"/>
    </location>
</feature>
<feature type="region of interest" description="Disordered" evidence="3">
    <location>
        <begin position="685"/>
        <end position="707"/>
    </location>
</feature>
<feature type="region of interest" description="Disordered" evidence="3">
    <location>
        <begin position="728"/>
        <end position="767"/>
    </location>
</feature>
<feature type="compositionally biased region" description="Basic and acidic residues" evidence="3">
    <location>
        <begin position="694"/>
        <end position="707"/>
    </location>
</feature>
<feature type="compositionally biased region" description="Basic and acidic residues" evidence="3">
    <location>
        <begin position="744"/>
        <end position="759"/>
    </location>
</feature>
<feature type="active site" description="Proton donor" evidence="2">
    <location>
        <position position="443"/>
    </location>
</feature>
<feature type="binding site" evidence="1">
    <location>
        <position position="84"/>
    </location>
    <ligand>
        <name>Zn(2+)</name>
        <dbReference type="ChEBI" id="CHEBI:29105"/>
        <label>1</label>
    </ligand>
</feature>
<feature type="binding site" evidence="1">
    <location>
        <position position="86"/>
    </location>
    <ligand>
        <name>Zn(2+)</name>
        <dbReference type="ChEBI" id="CHEBI:29105"/>
        <label>1</label>
    </ligand>
</feature>
<feature type="binding site" evidence="1">
    <location>
        <position position="88"/>
    </location>
    <ligand>
        <name>Zn(2+)</name>
        <dbReference type="ChEBI" id="CHEBI:29105"/>
        <label>2</label>
    </ligand>
</feature>
<feature type="binding site" evidence="1">
    <location>
        <position position="89"/>
    </location>
    <ligand>
        <name>Zn(2+)</name>
        <dbReference type="ChEBI" id="CHEBI:29105"/>
        <label>2</label>
    </ligand>
</feature>
<feature type="binding site" evidence="1">
    <location>
        <position position="174"/>
    </location>
    <ligand>
        <name>Zn(2+)</name>
        <dbReference type="ChEBI" id="CHEBI:29105"/>
        <label>1</label>
    </ligand>
</feature>
<feature type="binding site" evidence="1">
    <location>
        <position position="195"/>
    </location>
    <ligand>
        <name>Zn(2+)</name>
        <dbReference type="ChEBI" id="CHEBI:29105"/>
        <label>1</label>
    </ligand>
</feature>
<feature type="binding site" evidence="1">
    <location>
        <position position="195"/>
    </location>
    <ligand>
        <name>Zn(2+)</name>
        <dbReference type="ChEBI" id="CHEBI:29105"/>
        <label>2</label>
    </ligand>
</feature>
<feature type="binding site" evidence="1">
    <location>
        <position position="465"/>
    </location>
    <ligand>
        <name>Zn(2+)</name>
        <dbReference type="ChEBI" id="CHEBI:29105"/>
        <label>2</label>
    </ligand>
</feature>
<protein>
    <recommendedName>
        <fullName>Endoribonuclease YSH1</fullName>
        <ecNumber>3.1.27.-</ecNumber>
    </recommendedName>
    <alternativeName>
        <fullName>mRNA 3'-end-processing protein YSH1</fullName>
    </alternativeName>
</protein>
<comment type="function">
    <text evidence="1">Component of the cleavage factor I (CF I) involved in pre-mRNA 3'-end processing.</text>
</comment>
<comment type="subcellular location">
    <subcellularLocation>
        <location evidence="1">Nucleus</location>
    </subcellularLocation>
</comment>
<comment type="similarity">
    <text evidence="4">Belongs to the metallo-beta-lactamase superfamily. RNA-metabolizing metallo-beta-lactamase-like family. CPSF2/YSH1 subfamily.</text>
</comment>
<proteinExistence type="inferred from homology"/>
<organism>
    <name type="scientific">Gibberella zeae (strain ATCC MYA-4620 / CBS 123657 / FGSC 9075 / NRRL 31084 / PH-1)</name>
    <name type="common">Wheat head blight fungus</name>
    <name type="synonym">Fusarium graminearum</name>
    <dbReference type="NCBI Taxonomy" id="229533"/>
    <lineage>
        <taxon>Eukaryota</taxon>
        <taxon>Fungi</taxon>
        <taxon>Dikarya</taxon>
        <taxon>Ascomycota</taxon>
        <taxon>Pezizomycotina</taxon>
        <taxon>Sordariomycetes</taxon>
        <taxon>Hypocreomycetidae</taxon>
        <taxon>Hypocreales</taxon>
        <taxon>Nectriaceae</taxon>
        <taxon>Fusarium</taxon>
    </lineage>
</organism>
<dbReference type="EC" id="3.1.27.-"/>
<dbReference type="EMBL" id="DS231663">
    <property type="protein sequence ID" value="ESU06048.1"/>
    <property type="molecule type" value="Genomic_DNA"/>
</dbReference>
<dbReference type="EMBL" id="HG970332">
    <property type="protein sequence ID" value="CEF72825.1"/>
    <property type="molecule type" value="Genomic_DNA"/>
</dbReference>
<dbReference type="RefSeq" id="XP_011316533.1">
    <property type="nucleotide sequence ID" value="XM_011318231.1"/>
</dbReference>
<dbReference type="SMR" id="Q4IPN9"/>
<dbReference type="FunCoup" id="Q4IPN9">
    <property type="interactions" value="968"/>
</dbReference>
<dbReference type="STRING" id="229533.Q4IPN9"/>
<dbReference type="GeneID" id="23548291"/>
<dbReference type="KEGG" id="fgr:FGSG_00819"/>
<dbReference type="VEuPathDB" id="FungiDB:FGRAMPH1_01G02051"/>
<dbReference type="eggNOG" id="KOG1137">
    <property type="taxonomic scope" value="Eukaryota"/>
</dbReference>
<dbReference type="HOGENOM" id="CLU_009673_2_1_1"/>
<dbReference type="InParanoid" id="Q4IPN9"/>
<dbReference type="OrthoDB" id="81455at110618"/>
<dbReference type="Proteomes" id="UP000070720">
    <property type="component" value="Chromosome 1"/>
</dbReference>
<dbReference type="GO" id="GO:0005847">
    <property type="term" value="C:mRNA cleavage and polyadenylation specificity factor complex"/>
    <property type="evidence" value="ECO:0007669"/>
    <property type="project" value="TreeGrafter"/>
</dbReference>
<dbReference type="GO" id="GO:0004534">
    <property type="term" value="F:5'-3' RNA exonuclease activity"/>
    <property type="evidence" value="ECO:0007669"/>
    <property type="project" value="TreeGrafter"/>
</dbReference>
<dbReference type="GO" id="GO:0046872">
    <property type="term" value="F:metal ion binding"/>
    <property type="evidence" value="ECO:0007669"/>
    <property type="project" value="UniProtKB-KW"/>
</dbReference>
<dbReference type="GO" id="GO:0003723">
    <property type="term" value="F:RNA binding"/>
    <property type="evidence" value="ECO:0007669"/>
    <property type="project" value="TreeGrafter"/>
</dbReference>
<dbReference type="GO" id="GO:0004521">
    <property type="term" value="F:RNA endonuclease activity"/>
    <property type="evidence" value="ECO:0007669"/>
    <property type="project" value="TreeGrafter"/>
</dbReference>
<dbReference type="GO" id="GO:0006397">
    <property type="term" value="P:mRNA processing"/>
    <property type="evidence" value="ECO:0007669"/>
    <property type="project" value="UniProtKB-KW"/>
</dbReference>
<dbReference type="GO" id="GO:0044550">
    <property type="term" value="P:secondary metabolite biosynthetic process"/>
    <property type="evidence" value="ECO:0007669"/>
    <property type="project" value="UniProtKB-ARBA"/>
</dbReference>
<dbReference type="CDD" id="cd16292">
    <property type="entry name" value="CPSF3-like_MBL-fold"/>
    <property type="match status" value="1"/>
</dbReference>
<dbReference type="FunFam" id="3.60.15.10:FF:000001">
    <property type="entry name" value="Cleavage and polyadenylation specificity factor"/>
    <property type="match status" value="1"/>
</dbReference>
<dbReference type="FunFam" id="3.40.50.10890:FF:000004">
    <property type="entry name" value="Cleavage and polyadenylation specifity factor"/>
    <property type="match status" value="1"/>
</dbReference>
<dbReference type="Gene3D" id="3.40.50.10890">
    <property type="match status" value="1"/>
</dbReference>
<dbReference type="Gene3D" id="3.60.15.10">
    <property type="entry name" value="Ribonuclease Z/Hydroxyacylglutathione hydrolase-like"/>
    <property type="match status" value="1"/>
</dbReference>
<dbReference type="InterPro" id="IPR022712">
    <property type="entry name" value="Beta_Casp"/>
</dbReference>
<dbReference type="InterPro" id="IPR021718">
    <property type="entry name" value="CPSF73-100_C"/>
</dbReference>
<dbReference type="InterPro" id="IPR050698">
    <property type="entry name" value="MBL"/>
</dbReference>
<dbReference type="InterPro" id="IPR001279">
    <property type="entry name" value="Metallo-B-lactamas"/>
</dbReference>
<dbReference type="InterPro" id="IPR036866">
    <property type="entry name" value="RibonucZ/Hydroxyglut_hydro"/>
</dbReference>
<dbReference type="InterPro" id="IPR011108">
    <property type="entry name" value="RMMBL"/>
</dbReference>
<dbReference type="PANTHER" id="PTHR11203">
    <property type="entry name" value="CLEAVAGE AND POLYADENYLATION SPECIFICITY FACTOR FAMILY MEMBER"/>
    <property type="match status" value="1"/>
</dbReference>
<dbReference type="PANTHER" id="PTHR11203:SF11">
    <property type="entry name" value="CLEAVAGE AND POLYADENYLATION SPECIFICITY FACTOR SUBUNIT 3"/>
    <property type="match status" value="1"/>
</dbReference>
<dbReference type="Pfam" id="PF10996">
    <property type="entry name" value="Beta-Casp"/>
    <property type="match status" value="1"/>
</dbReference>
<dbReference type="Pfam" id="PF11718">
    <property type="entry name" value="CPSF73-100_C"/>
    <property type="match status" value="1"/>
</dbReference>
<dbReference type="Pfam" id="PF16661">
    <property type="entry name" value="Lactamase_B_6"/>
    <property type="match status" value="1"/>
</dbReference>
<dbReference type="Pfam" id="PF07521">
    <property type="entry name" value="RMMBL"/>
    <property type="match status" value="1"/>
</dbReference>
<dbReference type="SMART" id="SM01027">
    <property type="entry name" value="Beta-Casp"/>
    <property type="match status" value="1"/>
</dbReference>
<dbReference type="SMART" id="SM01098">
    <property type="entry name" value="CPSF73-100_C"/>
    <property type="match status" value="1"/>
</dbReference>
<dbReference type="SMART" id="SM00849">
    <property type="entry name" value="Lactamase_B"/>
    <property type="match status" value="1"/>
</dbReference>
<dbReference type="SUPFAM" id="SSF56281">
    <property type="entry name" value="Metallo-hydrolase/oxidoreductase"/>
    <property type="match status" value="1"/>
</dbReference>
<sequence>MASKRKAAAMNAAAAEEPVDPSDELMFLCLGGGNEVGRSCHIIQYKGKTVMLDAGQHPAYDGLAALPFYDDFDLSTVDVLLISHFHIDHAASLPYVLAKTNFRGRVFMTHPTKAIYKWLIQDSVRVGNTSSNPTTQPVYTEQDHLNTFPQIEAIDYHTTHTISSIRITPYPAGHVLGAAMFLIEIAGLNIFFTGDYSREQDRHLVSAEVPKGVKIDVLITESTYGIASHVPRLEREQALMKSITSILNRGGRVLMPVFALGRAQELLLILDEYWGKHADFQKYPIYYASNLARKCMLIYQTYVGAMNDNIKRLFRERMAEAEASGDGAGKGGPWDFKYIRSLKNLDRFDDVGGCVMLASPGMLQNGVSRELLERWAPSEKNGVIITGYSVEGTMAKQIMQEPDQIQAVMSRSMAGARRMPGGDGEKVLIPRRCSVQEYSFAAHVDGVENREFIEEVQAPVVILVHGEQHNMMRLKSKLLSLNANKTAKVKVYSPRNCEELRIPFKADKIAKVVGKLACIQPPQSIHPDQTATPPLVTGVLVQNDFKLSLMAPEDLREYAGLNTTTITCKQRLTLSAAGVDLVKWALEGTFGNIEELPEMRRAKNGQNGHADKMITDGDDESKQEDADEEVASLVAAYLVMGCVSVRYRTNGEVELEWEGNMLNDGIADSVMAVLFSVESSPAAVKRSSAKHSHSHDLPEVNPHHSATPEERLERLLWFLEAQFGQDNVAPVTTPKLPPLEDVDDKNKNEGEDEDAMKTDEDGEDAQLQERQQKEIERLHKIGIPVPGVSIKVDKMSATVWLEDLEVESSHKVFADRVRAVVERAIEVTAPLWG</sequence>
<accession>Q4IPN9</accession>
<accession>A0A0E0RNK0</accession>
<accession>I1RBA7</accession>
<accession>V6QUP7</accession>
<evidence type="ECO:0000250" key="1"/>
<evidence type="ECO:0000255" key="2"/>
<evidence type="ECO:0000256" key="3">
    <source>
        <dbReference type="SAM" id="MobiDB-lite"/>
    </source>
</evidence>
<evidence type="ECO:0000305" key="4"/>
<gene>
    <name type="primary">YSH1</name>
    <name type="ORF">FGRRES_00819</name>
    <name type="ORF">FGSG_00819</name>
</gene>